<dbReference type="EC" id="2.4.1.182" evidence="1"/>
<dbReference type="EMBL" id="CP000086">
    <property type="protein sequence ID" value="ABC37543.1"/>
    <property type="molecule type" value="Genomic_DNA"/>
</dbReference>
<dbReference type="RefSeq" id="WP_009890460.1">
    <property type="nucleotide sequence ID" value="NZ_CP008785.1"/>
</dbReference>
<dbReference type="SMR" id="Q2SWY5"/>
<dbReference type="CAZy" id="GT19">
    <property type="family name" value="Glycosyltransferase Family 19"/>
</dbReference>
<dbReference type="GeneID" id="45121768"/>
<dbReference type="KEGG" id="bte:BTH_I2040"/>
<dbReference type="HOGENOM" id="CLU_036577_3_0_4"/>
<dbReference type="UniPathway" id="UPA00973"/>
<dbReference type="Proteomes" id="UP000001930">
    <property type="component" value="Chromosome I"/>
</dbReference>
<dbReference type="GO" id="GO:0016020">
    <property type="term" value="C:membrane"/>
    <property type="evidence" value="ECO:0007669"/>
    <property type="project" value="GOC"/>
</dbReference>
<dbReference type="GO" id="GO:0008915">
    <property type="term" value="F:lipid-A-disaccharide synthase activity"/>
    <property type="evidence" value="ECO:0007669"/>
    <property type="project" value="UniProtKB-UniRule"/>
</dbReference>
<dbReference type="GO" id="GO:0005543">
    <property type="term" value="F:phospholipid binding"/>
    <property type="evidence" value="ECO:0007669"/>
    <property type="project" value="TreeGrafter"/>
</dbReference>
<dbReference type="GO" id="GO:0009245">
    <property type="term" value="P:lipid A biosynthetic process"/>
    <property type="evidence" value="ECO:0007669"/>
    <property type="project" value="UniProtKB-UniRule"/>
</dbReference>
<dbReference type="HAMAP" id="MF_00392">
    <property type="entry name" value="LpxB"/>
    <property type="match status" value="1"/>
</dbReference>
<dbReference type="InterPro" id="IPR003835">
    <property type="entry name" value="Glyco_trans_19"/>
</dbReference>
<dbReference type="NCBIfam" id="TIGR00215">
    <property type="entry name" value="lpxB"/>
    <property type="match status" value="1"/>
</dbReference>
<dbReference type="PANTHER" id="PTHR30372">
    <property type="entry name" value="LIPID-A-DISACCHARIDE SYNTHASE"/>
    <property type="match status" value="1"/>
</dbReference>
<dbReference type="PANTHER" id="PTHR30372:SF4">
    <property type="entry name" value="LIPID-A-DISACCHARIDE SYNTHASE, MITOCHONDRIAL-RELATED"/>
    <property type="match status" value="1"/>
</dbReference>
<dbReference type="Pfam" id="PF02684">
    <property type="entry name" value="LpxB"/>
    <property type="match status" value="1"/>
</dbReference>
<dbReference type="SUPFAM" id="SSF53756">
    <property type="entry name" value="UDP-Glycosyltransferase/glycogen phosphorylase"/>
    <property type="match status" value="1"/>
</dbReference>
<name>LPXB_BURTA</name>
<accession>Q2SWY5</accession>
<sequence length="388" mass="42128">MAFQPTPLRVALVAGEPSGDLLGASLLGGLHAQLPASSRYYGIGGPRMTAVDFDAHWPMEKLAVRGYVEALKHIPEILRIRGELKRQLLAEPPDAFIGIDAPDFNFGLEQALRGAGIPTVHFVCPSIWAWRGGRIKKIVKAVDHMLCLFPFEPELLEKAGVAATFVGHPLADEIPLEPDMHGARIALGLPDSGPVIAVLPGSRRSEIELIGPTFFDAMALMQQREPGVRFVVPAATPALRELLQPLVDAHPLLSVTLTEGRAQVAMTAADAILVKSGTVTLEAALLKKPMVISYKVPWLTGQIMRRQGYLPYVGLPNILAGRFVVPELLQHFATPEALADATLTQLRDDANRRTLTGIFTDMHLALRQNTAQRAAEAVARVIDSRKPH</sequence>
<keyword id="KW-0328">Glycosyltransferase</keyword>
<keyword id="KW-0441">Lipid A biosynthesis</keyword>
<keyword id="KW-0444">Lipid biosynthesis</keyword>
<keyword id="KW-0443">Lipid metabolism</keyword>
<keyword id="KW-0808">Transferase</keyword>
<comment type="function">
    <text evidence="1">Condensation of UDP-2,3-diacylglucosamine and 2,3-diacylglucosamine-1-phosphate to form lipid A disaccharide, a precursor of lipid A, a phosphorylated glycolipid that anchors the lipopolysaccharide to the outer membrane of the cell.</text>
</comment>
<comment type="catalytic activity">
    <reaction evidence="1">
        <text>a lipid X + a UDP-2-N,3-O-bis[(3R)-3-hydroxyacyl]-alpha-D-glucosamine = a lipid A disaccharide + UDP + H(+)</text>
        <dbReference type="Rhea" id="RHEA:67828"/>
        <dbReference type="ChEBI" id="CHEBI:15378"/>
        <dbReference type="ChEBI" id="CHEBI:58223"/>
        <dbReference type="ChEBI" id="CHEBI:137748"/>
        <dbReference type="ChEBI" id="CHEBI:176338"/>
        <dbReference type="ChEBI" id="CHEBI:176343"/>
        <dbReference type="EC" id="2.4.1.182"/>
    </reaction>
</comment>
<comment type="pathway">
    <text evidence="1">Bacterial outer membrane biogenesis; LPS lipid A biosynthesis.</text>
</comment>
<comment type="similarity">
    <text evidence="1">Belongs to the LpxB family.</text>
</comment>
<evidence type="ECO:0000255" key="1">
    <source>
        <dbReference type="HAMAP-Rule" id="MF_00392"/>
    </source>
</evidence>
<protein>
    <recommendedName>
        <fullName evidence="1">Lipid-A-disaccharide synthase</fullName>
        <ecNumber evidence="1">2.4.1.182</ecNumber>
    </recommendedName>
</protein>
<feature type="chain" id="PRO_0000255168" description="Lipid-A-disaccharide synthase">
    <location>
        <begin position="1"/>
        <end position="388"/>
    </location>
</feature>
<proteinExistence type="inferred from homology"/>
<reference key="1">
    <citation type="journal article" date="2005" name="BMC Genomics">
        <title>Bacterial genome adaptation to niches: divergence of the potential virulence genes in three Burkholderia species of different survival strategies.</title>
        <authorList>
            <person name="Kim H.S."/>
            <person name="Schell M.A."/>
            <person name="Yu Y."/>
            <person name="Ulrich R.L."/>
            <person name="Sarria S.H."/>
            <person name="Nierman W.C."/>
            <person name="DeShazer D."/>
        </authorList>
    </citation>
    <scope>NUCLEOTIDE SEQUENCE [LARGE SCALE GENOMIC DNA]</scope>
    <source>
        <strain>ATCC 700388 / DSM 13276 / CCUG 48851 / CIP 106301 / E264</strain>
    </source>
</reference>
<organism>
    <name type="scientific">Burkholderia thailandensis (strain ATCC 700388 / DSM 13276 / CCUG 48851 / CIP 106301 / E264)</name>
    <dbReference type="NCBI Taxonomy" id="271848"/>
    <lineage>
        <taxon>Bacteria</taxon>
        <taxon>Pseudomonadati</taxon>
        <taxon>Pseudomonadota</taxon>
        <taxon>Betaproteobacteria</taxon>
        <taxon>Burkholderiales</taxon>
        <taxon>Burkholderiaceae</taxon>
        <taxon>Burkholderia</taxon>
        <taxon>pseudomallei group</taxon>
    </lineage>
</organism>
<gene>
    <name evidence="1" type="primary">lpxB</name>
    <name type="ordered locus">BTH_I2040</name>
</gene>